<feature type="chain" id="PRO_0000129790" description="Small ribosomal subunit protein uS19">
    <location>
        <begin position="1"/>
        <end position="91"/>
    </location>
</feature>
<sequence length="91" mass="10175">MSRSIKKGPFVDAHLIKKVDAAVAGKDKKPIKTWSRRSTVLPEFIGLTIAVHNGRQHVPIYINENMVGHKLGEFALTRTFKGHAADKKSKR</sequence>
<evidence type="ECO:0000255" key="1">
    <source>
        <dbReference type="HAMAP-Rule" id="MF_00531"/>
    </source>
</evidence>
<evidence type="ECO:0000305" key="2"/>
<reference key="1">
    <citation type="journal article" date="2003" name="Nat. Genet.">
        <title>Comparative analysis of the genome sequences of Bordetella pertussis, Bordetella parapertussis and Bordetella bronchiseptica.</title>
        <authorList>
            <person name="Parkhill J."/>
            <person name="Sebaihia M."/>
            <person name="Preston A."/>
            <person name="Murphy L.D."/>
            <person name="Thomson N.R."/>
            <person name="Harris D.E."/>
            <person name="Holden M.T.G."/>
            <person name="Churcher C.M."/>
            <person name="Bentley S.D."/>
            <person name="Mungall K.L."/>
            <person name="Cerdeno-Tarraga A.-M."/>
            <person name="Temple L."/>
            <person name="James K.D."/>
            <person name="Harris B."/>
            <person name="Quail M.A."/>
            <person name="Achtman M."/>
            <person name="Atkin R."/>
            <person name="Baker S."/>
            <person name="Basham D."/>
            <person name="Bason N."/>
            <person name="Cherevach I."/>
            <person name="Chillingworth T."/>
            <person name="Collins M."/>
            <person name="Cronin A."/>
            <person name="Davis P."/>
            <person name="Doggett J."/>
            <person name="Feltwell T."/>
            <person name="Goble A."/>
            <person name="Hamlin N."/>
            <person name="Hauser H."/>
            <person name="Holroyd S."/>
            <person name="Jagels K."/>
            <person name="Leather S."/>
            <person name="Moule S."/>
            <person name="Norberczak H."/>
            <person name="O'Neil S."/>
            <person name="Ormond D."/>
            <person name="Price C."/>
            <person name="Rabbinowitsch E."/>
            <person name="Rutter S."/>
            <person name="Sanders M."/>
            <person name="Saunders D."/>
            <person name="Seeger K."/>
            <person name="Sharp S."/>
            <person name="Simmonds M."/>
            <person name="Skelton J."/>
            <person name="Squares R."/>
            <person name="Squares S."/>
            <person name="Stevens K."/>
            <person name="Unwin L."/>
            <person name="Whitehead S."/>
            <person name="Barrell B.G."/>
            <person name="Maskell D.J."/>
        </authorList>
    </citation>
    <scope>NUCLEOTIDE SEQUENCE [LARGE SCALE GENOMIC DNA]</scope>
    <source>
        <strain>Tohama I / ATCC BAA-589 / NCTC 13251</strain>
    </source>
</reference>
<comment type="function">
    <text evidence="1">Protein S19 forms a complex with S13 that binds strongly to the 16S ribosomal RNA.</text>
</comment>
<comment type="similarity">
    <text evidence="1">Belongs to the universal ribosomal protein uS19 family.</text>
</comment>
<keyword id="KW-1185">Reference proteome</keyword>
<keyword id="KW-0687">Ribonucleoprotein</keyword>
<keyword id="KW-0689">Ribosomal protein</keyword>
<keyword id="KW-0694">RNA-binding</keyword>
<keyword id="KW-0699">rRNA-binding</keyword>
<proteinExistence type="inferred from homology"/>
<protein>
    <recommendedName>
        <fullName evidence="1">Small ribosomal subunit protein uS19</fullName>
    </recommendedName>
    <alternativeName>
        <fullName evidence="2">30S ribosomal protein S19</fullName>
    </alternativeName>
</protein>
<name>RS19_BORPE</name>
<accession>Q7VTC9</accession>
<dbReference type="EMBL" id="BX640422">
    <property type="protein sequence ID" value="CAE43875.1"/>
    <property type="molecule type" value="Genomic_DNA"/>
</dbReference>
<dbReference type="RefSeq" id="NP_882127.1">
    <property type="nucleotide sequence ID" value="NC_002929.2"/>
</dbReference>
<dbReference type="RefSeq" id="WP_010931566.1">
    <property type="nucleotide sequence ID" value="NZ_CP039022.1"/>
</dbReference>
<dbReference type="SMR" id="Q7VTC9"/>
<dbReference type="STRING" id="257313.BP3617"/>
<dbReference type="PaxDb" id="257313-BP3617"/>
<dbReference type="GeneID" id="69600155"/>
<dbReference type="KEGG" id="bpe:BP3617"/>
<dbReference type="PATRIC" id="fig|257313.5.peg.3915"/>
<dbReference type="eggNOG" id="COG0185">
    <property type="taxonomic scope" value="Bacteria"/>
</dbReference>
<dbReference type="HOGENOM" id="CLU_144911_0_1_4"/>
<dbReference type="Proteomes" id="UP000002676">
    <property type="component" value="Chromosome"/>
</dbReference>
<dbReference type="GO" id="GO:0005737">
    <property type="term" value="C:cytoplasm"/>
    <property type="evidence" value="ECO:0007669"/>
    <property type="project" value="UniProtKB-ARBA"/>
</dbReference>
<dbReference type="GO" id="GO:0015935">
    <property type="term" value="C:small ribosomal subunit"/>
    <property type="evidence" value="ECO:0007669"/>
    <property type="project" value="InterPro"/>
</dbReference>
<dbReference type="GO" id="GO:0019843">
    <property type="term" value="F:rRNA binding"/>
    <property type="evidence" value="ECO:0007669"/>
    <property type="project" value="UniProtKB-UniRule"/>
</dbReference>
<dbReference type="GO" id="GO:0003735">
    <property type="term" value="F:structural constituent of ribosome"/>
    <property type="evidence" value="ECO:0007669"/>
    <property type="project" value="InterPro"/>
</dbReference>
<dbReference type="GO" id="GO:0000028">
    <property type="term" value="P:ribosomal small subunit assembly"/>
    <property type="evidence" value="ECO:0007669"/>
    <property type="project" value="TreeGrafter"/>
</dbReference>
<dbReference type="GO" id="GO:0006412">
    <property type="term" value="P:translation"/>
    <property type="evidence" value="ECO:0007669"/>
    <property type="project" value="UniProtKB-UniRule"/>
</dbReference>
<dbReference type="FunFam" id="3.30.860.10:FF:000001">
    <property type="entry name" value="30S ribosomal protein S19"/>
    <property type="match status" value="1"/>
</dbReference>
<dbReference type="Gene3D" id="3.30.860.10">
    <property type="entry name" value="30s Ribosomal Protein S19, Chain A"/>
    <property type="match status" value="1"/>
</dbReference>
<dbReference type="HAMAP" id="MF_00531">
    <property type="entry name" value="Ribosomal_uS19"/>
    <property type="match status" value="1"/>
</dbReference>
<dbReference type="InterPro" id="IPR002222">
    <property type="entry name" value="Ribosomal_uS19"/>
</dbReference>
<dbReference type="InterPro" id="IPR005732">
    <property type="entry name" value="Ribosomal_uS19_bac-type"/>
</dbReference>
<dbReference type="InterPro" id="IPR020934">
    <property type="entry name" value="Ribosomal_uS19_CS"/>
</dbReference>
<dbReference type="InterPro" id="IPR023575">
    <property type="entry name" value="Ribosomal_uS19_SF"/>
</dbReference>
<dbReference type="NCBIfam" id="TIGR01050">
    <property type="entry name" value="rpsS_bact"/>
    <property type="match status" value="1"/>
</dbReference>
<dbReference type="PANTHER" id="PTHR11880">
    <property type="entry name" value="RIBOSOMAL PROTEIN S19P FAMILY MEMBER"/>
    <property type="match status" value="1"/>
</dbReference>
<dbReference type="PANTHER" id="PTHR11880:SF8">
    <property type="entry name" value="SMALL RIBOSOMAL SUBUNIT PROTEIN US19M"/>
    <property type="match status" value="1"/>
</dbReference>
<dbReference type="Pfam" id="PF00203">
    <property type="entry name" value="Ribosomal_S19"/>
    <property type="match status" value="1"/>
</dbReference>
<dbReference type="PIRSF" id="PIRSF002144">
    <property type="entry name" value="Ribosomal_S19"/>
    <property type="match status" value="1"/>
</dbReference>
<dbReference type="PRINTS" id="PR00975">
    <property type="entry name" value="RIBOSOMALS19"/>
</dbReference>
<dbReference type="SUPFAM" id="SSF54570">
    <property type="entry name" value="Ribosomal protein S19"/>
    <property type="match status" value="1"/>
</dbReference>
<dbReference type="PROSITE" id="PS00323">
    <property type="entry name" value="RIBOSOMAL_S19"/>
    <property type="match status" value="1"/>
</dbReference>
<gene>
    <name evidence="1" type="primary">rpsS</name>
    <name type="ordered locus">BP3617</name>
</gene>
<organism>
    <name type="scientific">Bordetella pertussis (strain Tohama I / ATCC BAA-589 / NCTC 13251)</name>
    <dbReference type="NCBI Taxonomy" id="257313"/>
    <lineage>
        <taxon>Bacteria</taxon>
        <taxon>Pseudomonadati</taxon>
        <taxon>Pseudomonadota</taxon>
        <taxon>Betaproteobacteria</taxon>
        <taxon>Burkholderiales</taxon>
        <taxon>Alcaligenaceae</taxon>
        <taxon>Bordetella</taxon>
    </lineage>
</organism>